<evidence type="ECO:0000250" key="1"/>
<evidence type="ECO:0000250" key="2">
    <source>
        <dbReference type="UniProtKB" id="O43148"/>
    </source>
</evidence>
<evidence type="ECO:0000250" key="3">
    <source>
        <dbReference type="UniProtKB" id="Q9D0L8"/>
    </source>
</evidence>
<evidence type="ECO:0000255" key="4">
    <source>
        <dbReference type="PROSITE-ProRule" id="PRU00895"/>
    </source>
</evidence>
<evidence type="ECO:0000256" key="5">
    <source>
        <dbReference type="SAM" id="MobiDB-lite"/>
    </source>
</evidence>
<evidence type="ECO:0007744" key="6">
    <source>
    </source>
</evidence>
<feature type="chain" id="PRO_0000248324" description="mRNA cap guanine-N(7) methyltransferase">
    <location>
        <begin position="1"/>
        <end position="461"/>
    </location>
</feature>
<feature type="domain" description="mRNA cap 0 methyltransferase" evidence="4">
    <location>
        <begin position="152"/>
        <end position="460"/>
    </location>
</feature>
<feature type="region of interest" description="Disordered" evidence="5">
    <location>
        <begin position="1"/>
        <end position="117"/>
    </location>
</feature>
<feature type="short sequence motif" description="Nuclear localization signal" evidence="1">
    <location>
        <begin position="107"/>
        <end position="109"/>
    </location>
</feature>
<feature type="compositionally biased region" description="Polar residues" evidence="5">
    <location>
        <begin position="14"/>
        <end position="29"/>
    </location>
</feature>
<feature type="compositionally biased region" description="Polar residues" evidence="5">
    <location>
        <begin position="49"/>
        <end position="58"/>
    </location>
</feature>
<feature type="compositionally biased region" description="Basic and acidic residues" evidence="5">
    <location>
        <begin position="65"/>
        <end position="93"/>
    </location>
</feature>
<feature type="binding site" evidence="4">
    <location>
        <begin position="161"/>
        <end position="162"/>
    </location>
    <ligand>
        <name>mRNA</name>
        <dbReference type="ChEBI" id="CHEBI:33699"/>
    </ligand>
    <ligandPart>
        <name>mRNA cap</name>
    </ligandPart>
</feature>
<feature type="binding site" evidence="4">
    <location>
        <position position="165"/>
    </location>
    <ligand>
        <name>S-adenosyl-L-methionine</name>
        <dbReference type="ChEBI" id="CHEBI:59789"/>
    </ligand>
</feature>
<feature type="binding site" evidence="4">
    <location>
        <position position="190"/>
    </location>
    <ligand>
        <name>S-adenosyl-L-methionine</name>
        <dbReference type="ChEBI" id="CHEBI:59789"/>
    </ligand>
</feature>
<feature type="binding site" evidence="4">
    <location>
        <position position="212"/>
    </location>
    <ligand>
        <name>S-adenosyl-L-methionine</name>
        <dbReference type="ChEBI" id="CHEBI:59789"/>
    </ligand>
</feature>
<feature type="binding site" evidence="2">
    <location>
        <position position="246"/>
    </location>
    <ligand>
        <name>S-adenosyl-L-methionine</name>
        <dbReference type="ChEBI" id="CHEBI:59789"/>
    </ligand>
</feature>
<feature type="binding site" evidence="2">
    <location>
        <position position="269"/>
    </location>
    <ligand>
        <name>S-adenosyl-L-methionine</name>
        <dbReference type="ChEBI" id="CHEBI:59789"/>
    </ligand>
</feature>
<feature type="binding site" evidence="2">
    <location>
        <position position="274"/>
    </location>
    <ligand>
        <name>S-adenosyl-L-methionine</name>
        <dbReference type="ChEBI" id="CHEBI:59789"/>
    </ligand>
</feature>
<feature type="site" description="mRNA cap binding" evidence="4">
    <location>
        <position position="193"/>
    </location>
</feature>
<feature type="site" description="mRNA cap binding" evidence="4">
    <location>
        <position position="199"/>
    </location>
</feature>
<feature type="site" description="mRNA cap binding" evidence="4">
    <location>
        <position position="224"/>
    </location>
</feature>
<feature type="site" description="mRNA cap binding" evidence="4">
    <location>
        <position position="273"/>
    </location>
</feature>
<feature type="site" description="mRNA cap binding" evidence="4">
    <location>
        <position position="355"/>
    </location>
</feature>
<feature type="site" description="mRNA cap binding" evidence="4">
    <location>
        <position position="452"/>
    </location>
</feature>
<feature type="modified residue" description="Phosphoserine" evidence="3">
    <location>
        <position position="11"/>
    </location>
</feature>
<feature type="modified residue" description="Phosphoserine" evidence="6">
    <location>
        <position position="15"/>
    </location>
</feature>
<feature type="modified residue" description="Phosphoserine" evidence="6">
    <location>
        <position position="16"/>
    </location>
</feature>
<feature type="modified residue" description="Phosphoserine" evidence="3">
    <location>
        <position position="58"/>
    </location>
</feature>
<feature type="modified residue" description="Phosphoserine" evidence="6">
    <location>
        <position position="94"/>
    </location>
</feature>
<feature type="modified residue" description="Phosphoserine" evidence="6">
    <location>
        <position position="99"/>
    </location>
</feature>
<proteinExistence type="evidence at protein level"/>
<keyword id="KW-0489">Methyltransferase</keyword>
<keyword id="KW-0506">mRNA capping</keyword>
<keyword id="KW-0507">mRNA processing</keyword>
<keyword id="KW-0539">Nucleus</keyword>
<keyword id="KW-0597">Phosphoprotein</keyword>
<keyword id="KW-1185">Reference proteome</keyword>
<keyword id="KW-0694">RNA-binding</keyword>
<keyword id="KW-0949">S-adenosyl-L-methionine</keyword>
<keyword id="KW-0808">Transferase</keyword>
<name>MCES_RAT</name>
<accession>Q5U2U7</accession>
<protein>
    <recommendedName>
        <fullName>mRNA cap guanine-N(7) methyltransferase</fullName>
        <ecNumber evidence="2">2.1.1.56</ecNumber>
    </recommendedName>
    <alternativeName>
        <fullName>RG7MT1</fullName>
    </alternativeName>
    <alternativeName>
        <fullName>mRNA (guanine-N(7))-methyltransferase</fullName>
    </alternativeName>
    <alternativeName>
        <fullName>mRNA cap methyltransferase</fullName>
    </alternativeName>
</protein>
<reference key="1">
    <citation type="journal article" date="2004" name="Genome Res.">
        <title>The status, quality, and expansion of the NIH full-length cDNA project: the Mammalian Gene Collection (MGC).</title>
        <authorList>
            <consortium name="The MGC Project Team"/>
        </authorList>
    </citation>
    <scope>NUCLEOTIDE SEQUENCE [LARGE SCALE MRNA]</scope>
    <source>
        <tissue>Heart</tissue>
    </source>
</reference>
<reference key="2">
    <citation type="journal article" date="2012" name="Nat. Commun.">
        <title>Quantitative maps of protein phosphorylation sites across 14 different rat organs and tissues.</title>
        <authorList>
            <person name="Lundby A."/>
            <person name="Secher A."/>
            <person name="Lage K."/>
            <person name="Nordsborg N.B."/>
            <person name="Dmytriyev A."/>
            <person name="Lundby C."/>
            <person name="Olsen J.V."/>
        </authorList>
    </citation>
    <scope>PHOSPHORYLATION [LARGE SCALE ANALYSIS] AT SER-15; SER-16; SER-94 AND SER-99</scope>
    <scope>IDENTIFICATION BY MASS SPECTROMETRY [LARGE SCALE ANALYSIS]</scope>
</reference>
<dbReference type="EC" id="2.1.1.56" evidence="2"/>
<dbReference type="EMBL" id="BC085858">
    <property type="protein sequence ID" value="AAH85858.1"/>
    <property type="molecule type" value="mRNA"/>
</dbReference>
<dbReference type="RefSeq" id="NP_001008300.1">
    <property type="nucleotide sequence ID" value="NM_001008299.2"/>
</dbReference>
<dbReference type="RefSeq" id="XP_006254956.1">
    <property type="nucleotide sequence ID" value="XM_006254894.3"/>
</dbReference>
<dbReference type="RefSeq" id="XP_006254957.1">
    <property type="nucleotide sequence ID" value="XM_006254895.5"/>
</dbReference>
<dbReference type="RefSeq" id="XP_038952589.1">
    <property type="nucleotide sequence ID" value="XM_039096661.2"/>
</dbReference>
<dbReference type="RefSeq" id="XP_063133260.1">
    <property type="nucleotide sequence ID" value="XM_063277190.1"/>
</dbReference>
<dbReference type="SMR" id="Q5U2U7"/>
<dbReference type="BioGRID" id="253542">
    <property type="interactions" value="2"/>
</dbReference>
<dbReference type="FunCoup" id="Q5U2U7">
    <property type="interactions" value="4944"/>
</dbReference>
<dbReference type="STRING" id="10116.ENSRNOP00000022410"/>
<dbReference type="iPTMnet" id="Q5U2U7"/>
<dbReference type="PhosphoSitePlus" id="Q5U2U7"/>
<dbReference type="jPOST" id="Q5U2U7"/>
<dbReference type="PaxDb" id="10116-ENSRNOP00000022410"/>
<dbReference type="Ensembl" id="ENSRNOT00000022410.5">
    <property type="protein sequence ID" value="ENSRNOP00000022410.4"/>
    <property type="gene ID" value="ENSRNOG00000016698.7"/>
</dbReference>
<dbReference type="GeneID" id="291534"/>
<dbReference type="KEGG" id="rno:291534"/>
<dbReference type="UCSC" id="RGD:1309242">
    <property type="organism name" value="rat"/>
</dbReference>
<dbReference type="AGR" id="RGD:1309242"/>
<dbReference type="CTD" id="8731"/>
<dbReference type="RGD" id="1309242">
    <property type="gene designation" value="Rnmt"/>
</dbReference>
<dbReference type="eggNOG" id="KOG1975">
    <property type="taxonomic scope" value="Eukaryota"/>
</dbReference>
<dbReference type="GeneTree" id="ENSGT00390000002368"/>
<dbReference type="HOGENOM" id="CLU_020346_0_1_1"/>
<dbReference type="InParanoid" id="Q5U2U7"/>
<dbReference type="PhylomeDB" id="Q5U2U7"/>
<dbReference type="TreeFam" id="TF314347"/>
<dbReference type="Reactome" id="R-RNO-72086">
    <property type="pathway name" value="mRNA Capping"/>
</dbReference>
<dbReference type="Reactome" id="R-RNO-77075">
    <property type="pathway name" value="RNA Pol II CTD phosphorylation and interaction with CE"/>
</dbReference>
<dbReference type="PRO" id="PR:Q5U2U7"/>
<dbReference type="Proteomes" id="UP000002494">
    <property type="component" value="Chromosome 18"/>
</dbReference>
<dbReference type="Bgee" id="ENSRNOG00000016698">
    <property type="expression patterns" value="Expressed in thymus and 20 other cell types or tissues"/>
</dbReference>
<dbReference type="GO" id="GO:0160130">
    <property type="term" value="C:mRNA cap methyltransferase RNMT:RAMAC complex"/>
    <property type="evidence" value="ECO:0000250"/>
    <property type="project" value="UniProtKB"/>
</dbReference>
<dbReference type="GO" id="GO:0031533">
    <property type="term" value="C:mRNA capping enzyme complex"/>
    <property type="evidence" value="ECO:0000266"/>
    <property type="project" value="RGD"/>
</dbReference>
<dbReference type="GO" id="GO:0005634">
    <property type="term" value="C:nucleus"/>
    <property type="evidence" value="ECO:0000250"/>
    <property type="project" value="UniProtKB"/>
</dbReference>
<dbReference type="GO" id="GO:0043235">
    <property type="term" value="C:receptor complex"/>
    <property type="evidence" value="ECO:0000266"/>
    <property type="project" value="RGD"/>
</dbReference>
<dbReference type="GO" id="GO:0004482">
    <property type="term" value="F:mRNA 5'-cap (guanine-N7-)-methyltransferase activity"/>
    <property type="evidence" value="ECO:0000250"/>
    <property type="project" value="UniProtKB"/>
</dbReference>
<dbReference type="GO" id="GO:0003723">
    <property type="term" value="F:RNA binding"/>
    <property type="evidence" value="ECO:0000250"/>
    <property type="project" value="UniProtKB"/>
</dbReference>
<dbReference type="GO" id="GO:0006370">
    <property type="term" value="P:7-methylguanosine mRNA capping"/>
    <property type="evidence" value="ECO:0000250"/>
    <property type="project" value="UniProtKB"/>
</dbReference>
<dbReference type="GO" id="GO:1990830">
    <property type="term" value="P:cellular response to leukemia inhibitory factor"/>
    <property type="evidence" value="ECO:0000266"/>
    <property type="project" value="RGD"/>
</dbReference>
<dbReference type="CDD" id="cd02440">
    <property type="entry name" value="AdoMet_MTases"/>
    <property type="match status" value="1"/>
</dbReference>
<dbReference type="Gene3D" id="3.40.50.150">
    <property type="entry name" value="Vaccinia Virus protein VP39"/>
    <property type="match status" value="1"/>
</dbReference>
<dbReference type="InterPro" id="IPR004971">
    <property type="entry name" value="mRNA_G-N7_MeTrfase_dom"/>
</dbReference>
<dbReference type="InterPro" id="IPR016899">
    <property type="entry name" value="mRNA_G-N7_MeTrfase_euk"/>
</dbReference>
<dbReference type="InterPro" id="IPR039753">
    <property type="entry name" value="RG7MT1"/>
</dbReference>
<dbReference type="InterPro" id="IPR029063">
    <property type="entry name" value="SAM-dependent_MTases_sf"/>
</dbReference>
<dbReference type="PANTHER" id="PTHR12189:SF2">
    <property type="entry name" value="MRNA CAP GUANINE-N7 METHYLTRANSFERASE"/>
    <property type="match status" value="1"/>
</dbReference>
<dbReference type="PANTHER" id="PTHR12189">
    <property type="entry name" value="MRNA GUANINE-7- METHYLTRANSFERASE"/>
    <property type="match status" value="1"/>
</dbReference>
<dbReference type="Pfam" id="PF03291">
    <property type="entry name" value="mRNA_G-N7_MeTrfase"/>
    <property type="match status" value="1"/>
</dbReference>
<dbReference type="PIRSF" id="PIRSF028762">
    <property type="entry name" value="ABD1"/>
    <property type="match status" value="1"/>
</dbReference>
<dbReference type="SUPFAM" id="SSF53335">
    <property type="entry name" value="S-adenosyl-L-methionine-dependent methyltransferases"/>
    <property type="match status" value="1"/>
</dbReference>
<dbReference type="PROSITE" id="PS51562">
    <property type="entry name" value="RNA_CAP0_MT"/>
    <property type="match status" value="1"/>
</dbReference>
<gene>
    <name type="primary">Rnmt</name>
</gene>
<comment type="function">
    <text evidence="2">Catalytic subunit of the mRNA-capping methyltransferase RNMT:RAMAC complex that methylates the N7 position of the added guanosine to the 5'-cap structure of mRNAs. Binds RNA containing 5'-terminal GpppC.</text>
</comment>
<comment type="catalytic activity">
    <reaction evidence="2 4">
        <text>a 5'-end (5'-triphosphoguanosine)-ribonucleoside in mRNA + S-adenosyl-L-methionine = a 5'-end (N(7)-methyl 5'-triphosphoguanosine)-ribonucleoside in mRNA + S-adenosyl-L-homocysteine</text>
        <dbReference type="Rhea" id="RHEA:67008"/>
        <dbReference type="Rhea" id="RHEA-COMP:17166"/>
        <dbReference type="Rhea" id="RHEA-COMP:17167"/>
        <dbReference type="ChEBI" id="CHEBI:57856"/>
        <dbReference type="ChEBI" id="CHEBI:59789"/>
        <dbReference type="ChEBI" id="CHEBI:156461"/>
        <dbReference type="ChEBI" id="CHEBI:167617"/>
        <dbReference type="EC" id="2.1.1.56"/>
    </reaction>
</comment>
<comment type="activity regulation">
    <text evidence="2">Methyltransferase activity is activated by RAMAC.</text>
</comment>
<comment type="subunit">
    <text evidence="2">Interacts with importin alpha, leading to stimulate both RNA-binding and methyltransferase activity. Interaction with importin alpha and beta is required for its nuclear localization, importin beta dissociating in response to RanGTP, allowing RNMT-importin alpha to bind RNA substrates. Interacts with elongating form of polymerase II and RNGTT. Interacts with RAMAC, this interaction significantly enhances RNA-binding and cap methyltransferase activity.</text>
</comment>
<comment type="subcellular location">
    <subcellularLocation>
        <location evidence="2">Nucleus</location>
    </subcellularLocation>
</comment>
<comment type="similarity">
    <text evidence="4">Belongs to the class I-like SAM-binding methyltransferase superfamily. mRNA cap 0 methyltransferase family.</text>
</comment>
<organism>
    <name type="scientific">Rattus norvegicus</name>
    <name type="common">Rat</name>
    <dbReference type="NCBI Taxonomy" id="10116"/>
    <lineage>
        <taxon>Eukaryota</taxon>
        <taxon>Metazoa</taxon>
        <taxon>Chordata</taxon>
        <taxon>Craniata</taxon>
        <taxon>Vertebrata</taxon>
        <taxon>Euteleostomi</taxon>
        <taxon>Mammalia</taxon>
        <taxon>Eutheria</taxon>
        <taxon>Euarchontoglires</taxon>
        <taxon>Glires</taxon>
        <taxon>Rodentia</taxon>
        <taxon>Myomorpha</taxon>
        <taxon>Muroidea</taxon>
        <taxon>Muridae</taxon>
        <taxon>Murinae</taxon>
        <taxon>Rattus</taxon>
    </lineage>
</organism>
<sequence length="461" mass="52817">MESSVKASVDSETESSPGVNETAAASGQRLSEKTRQQADQPKTQDDLVEQNSSYVQDSPSKKRKLDVEIILDEKHSEDDGGASKRSKLERGGGSEDEPSPGGLTERKRKLQPQDALETQTRKFQKLEEGHSSAVAAHYNELQEVGLVKRSQSRIFYLRNFNNWIKSILIGEILEKVRQRKNRDITVLDLGCGKGGDLLKWRKGRISRLVCADIADISMKQCQQRYEDMKCRRDNEYIFSAEFITADCSKELLVEKFHDPEMYFDICSCQFACHYSFESLEQADMMLRNACGRLNPGGYFIGTTPNSFELIRRLEASETESFGNEIYTVKFQKKGNYPLFGCKYDFNLEGVVDVPEFLVYFPLLTEMAKKYNMKLIYKKTFLEFYEEKIKNNENKMLLKRMQALESYPANENSKLASEKAGDYAHAAEYMKNSQVRLPLGTLSKSEWEATSIYLVFAFEKQQ</sequence>